<keyword id="KW-0112">Calmodulin-binding</keyword>
<keyword id="KW-0472">Membrane</keyword>
<keyword id="KW-0568">Pathogenesis-related protein</keyword>
<keyword id="KW-0611">Plant defense</keyword>
<keyword id="KW-1185">Reference proteome</keyword>
<keyword id="KW-0812">Transmembrane</keyword>
<keyword id="KW-1133">Transmembrane helix</keyword>
<organism>
    <name type="scientific">Oryza sativa subsp. japonica</name>
    <name type="common">Rice</name>
    <dbReference type="NCBI Taxonomy" id="39947"/>
    <lineage>
        <taxon>Eukaryota</taxon>
        <taxon>Viridiplantae</taxon>
        <taxon>Streptophyta</taxon>
        <taxon>Embryophyta</taxon>
        <taxon>Tracheophyta</taxon>
        <taxon>Spermatophyta</taxon>
        <taxon>Magnoliopsida</taxon>
        <taxon>Liliopsida</taxon>
        <taxon>Poales</taxon>
        <taxon>Poaceae</taxon>
        <taxon>BOP clade</taxon>
        <taxon>Oryzoideae</taxon>
        <taxon>Oryzeae</taxon>
        <taxon>Oryzinae</taxon>
        <taxon>Oryza</taxon>
        <taxon>Oryza sativa</taxon>
    </lineage>
</organism>
<feature type="chain" id="PRO_0000209930" description="MLO protein homolog 1">
    <location>
        <begin position="1"/>
        <end position="540"/>
    </location>
</feature>
<feature type="topological domain" description="Extracellular" evidence="2">
    <location>
        <begin position="1"/>
        <end position="16"/>
    </location>
</feature>
<feature type="transmembrane region" description="Helical; Name=1" evidence="2">
    <location>
        <begin position="17"/>
        <end position="37"/>
    </location>
</feature>
<feature type="topological domain" description="Cytoplasmic" evidence="2">
    <location>
        <begin position="38"/>
        <end position="60"/>
    </location>
</feature>
<feature type="transmembrane region" description="Helical; Name=2" evidence="2">
    <location>
        <begin position="61"/>
        <end position="81"/>
    </location>
</feature>
<feature type="topological domain" description="Extracellular" evidence="2">
    <location>
        <begin position="82"/>
        <end position="142"/>
    </location>
</feature>
<feature type="transmembrane region" description="Helical; Name=3" evidence="2">
    <location>
        <begin position="143"/>
        <end position="163"/>
    </location>
</feature>
<feature type="topological domain" description="Cytoplasmic" evidence="2">
    <location>
        <begin position="164"/>
        <end position="265"/>
    </location>
</feature>
<feature type="transmembrane region" description="Helical; Name=4" evidence="2">
    <location>
        <begin position="266"/>
        <end position="286"/>
    </location>
</feature>
<feature type="topological domain" description="Extracellular" evidence="2">
    <location>
        <position position="287"/>
    </location>
</feature>
<feature type="transmembrane region" description="Helical; Name=5" evidence="2">
    <location>
        <begin position="288"/>
        <end position="308"/>
    </location>
</feature>
<feature type="topological domain" description="Cytoplasmic" evidence="2">
    <location>
        <begin position="309"/>
        <end position="347"/>
    </location>
</feature>
<feature type="transmembrane region" description="Helical; Name=6" evidence="2">
    <location>
        <begin position="348"/>
        <end position="368"/>
    </location>
</feature>
<feature type="topological domain" description="Extracellular" evidence="2">
    <location>
        <begin position="369"/>
        <end position="383"/>
    </location>
</feature>
<feature type="transmembrane region" description="Helical; Name=7" evidence="2">
    <location>
        <begin position="384"/>
        <end position="404"/>
    </location>
</feature>
<feature type="topological domain" description="Cytoplasmic" evidence="2">
    <location>
        <begin position="405"/>
        <end position="540"/>
    </location>
</feature>
<feature type="region of interest" description="Calmodulin-binding">
    <location>
        <begin position="426"/>
        <end position="447"/>
    </location>
</feature>
<feature type="region of interest" description="Disordered" evidence="3">
    <location>
        <begin position="468"/>
        <end position="526"/>
    </location>
</feature>
<feature type="compositionally biased region" description="Basic and acidic residues" evidence="3">
    <location>
        <begin position="474"/>
        <end position="483"/>
    </location>
</feature>
<feature type="compositionally biased region" description="Basic and acidic residues" evidence="3">
    <location>
        <begin position="512"/>
        <end position="521"/>
    </location>
</feature>
<reference key="1">
    <citation type="journal article" date="2005" name="Nature">
        <title>The map-based sequence of the rice genome.</title>
        <authorList>
            <consortium name="International rice genome sequencing project (IRGSP)"/>
        </authorList>
    </citation>
    <scope>NUCLEOTIDE SEQUENCE [LARGE SCALE GENOMIC DNA]</scope>
    <source>
        <strain>cv. Nipponbare</strain>
    </source>
</reference>
<reference key="2">
    <citation type="journal article" date="2008" name="Nucleic Acids Res.">
        <title>The rice annotation project database (RAP-DB): 2008 update.</title>
        <authorList>
            <consortium name="The rice annotation project (RAP)"/>
        </authorList>
    </citation>
    <scope>GENOME REANNOTATION</scope>
    <source>
        <strain>cv. Nipponbare</strain>
    </source>
</reference>
<reference key="3">
    <citation type="journal article" date="2013" name="Rice">
        <title>Improvement of the Oryza sativa Nipponbare reference genome using next generation sequence and optical map data.</title>
        <authorList>
            <person name="Kawahara Y."/>
            <person name="de la Bastide M."/>
            <person name="Hamilton J.P."/>
            <person name="Kanamori H."/>
            <person name="McCombie W.R."/>
            <person name="Ouyang S."/>
            <person name="Schwartz D.C."/>
            <person name="Tanaka T."/>
            <person name="Wu J."/>
            <person name="Zhou S."/>
            <person name="Childs K.L."/>
            <person name="Davidson R.M."/>
            <person name="Lin H."/>
            <person name="Quesada-Ocampo L."/>
            <person name="Vaillancourt B."/>
            <person name="Sakai H."/>
            <person name="Lee S.S."/>
            <person name="Kim J."/>
            <person name="Numa H."/>
            <person name="Itoh T."/>
            <person name="Buell C.R."/>
            <person name="Matsumoto T."/>
        </authorList>
    </citation>
    <scope>GENOME REANNOTATION</scope>
    <source>
        <strain>cv. Nipponbare</strain>
    </source>
</reference>
<reference key="4">
    <citation type="journal article" date="2002" name="Yi Chuan Xue Bao">
        <title>Analysis and mapping of homologous sequences of barley disease resistance gene Mlo and maize disease resistance gene Hm1 in rice.</title>
        <authorList>
            <person name="Liu W.D."/>
            <person name="Wang S.P."/>
        </authorList>
    </citation>
    <scope>NUCLEOTIDE SEQUENCE [GENOMIC DNA] OF 128-241</scope>
    <source>
        <strain>cv. LTH</strain>
    </source>
</reference>
<comment type="function">
    <text evidence="1">May be involved in modulation of pathogen defense and leaf cell death. Activity seems to be regulated by Ca(2+)-dependent calmodulin binding and seems not to require heterotrimeric G proteins (By similarity).</text>
</comment>
<comment type="subcellular location">
    <subcellularLocation>
        <location evidence="1">Membrane</location>
        <topology evidence="1">Multi-pass membrane protein</topology>
    </subcellularLocation>
</comment>
<comment type="domain">
    <text evidence="1">The C-terminus contains a calmodulin-binding domain, which binds calmodulin in a calcium-dependent fashion.</text>
</comment>
<comment type="similarity">
    <text evidence="4">Belongs to the MLO family.</text>
</comment>
<comment type="sequence caution" evidence="4">
    <conflict type="frameshift">
        <sequence resource="EMBL-CDS" id="AAO61753"/>
    </conflict>
</comment>
<comment type="sequence caution" evidence="4">
    <conflict type="erroneous gene model prediction">
        <sequence resource="EMBL-CDS" id="BAD37345"/>
    </conflict>
</comment>
<comment type="sequence caution" evidence="4">
    <conflict type="erroneous gene model prediction">
        <sequence resource="EMBL-CDS" id="BAD37627"/>
    </conflict>
</comment>
<comment type="sequence caution" evidence="4">
    <conflict type="erroneous gene model prediction">
        <sequence resource="EMBL-CDS" id="BAF19578"/>
    </conflict>
</comment>
<accession>Q0DC45</accession>
<accession>O49914</accession>
<accession>Q67W42</accession>
<accession>Q84TU0</accession>
<protein>
    <recommendedName>
        <fullName>MLO protein homolog 1</fullName>
    </recommendedName>
    <alternativeName>
        <fullName>OsMLO1</fullName>
    </alternativeName>
</protein>
<gene>
    <name type="primary">MLO1</name>
    <name type="synonym">MLO-H1</name>
    <name type="ordered locus">Os06g0486300</name>
    <name type="ordered locus">LOC_Os06g29110</name>
    <name type="ORF">OJ1568_D07.18</name>
    <name type="ORF">P0008F02.13</name>
</gene>
<evidence type="ECO:0000250" key="1"/>
<evidence type="ECO:0000255" key="2"/>
<evidence type="ECO:0000256" key="3">
    <source>
        <dbReference type="SAM" id="MobiDB-lite"/>
    </source>
</evidence>
<evidence type="ECO:0000305" key="4"/>
<name>MLOH1_ORYSJ</name>
<sequence>MAGGRSGSRELPETPTWAVAVVCAVLVLVSVAMEHGLHNLSHWFRRRQKKAMGDALDKIKAELMLLGFISLLLTVAQAPISKICIPKSAANILLPCKAGQDAIEEEAASDRRSLAGAGGGDYCSKFDGKVALMSAKSMHQLHIFIFVLAVFHVTYCVITMGLGRLKMKKWKKWESQTNSLEYQFAIDPSRFRFTHQTSFVKRHLGSFSSTPGLRWIVAFFRQFFGSVTKVDYLTMRQGFINAHLSQNSKFDFHKYIKRSLEDDFKVVVGISLPLWFVGILVLFLDIHGLGTLIWISFVPLIIVLLVGTKLEMVIMQMAQEIQDRATVIQGAPVVEPSNKYFWFNRPDWVLFFIHLTLFHNAFQMAHFVWTMATPGLKKCFHENIWLSIVEVIVGISLQVLCSYITFPLYALVTQMGSNMKKTIFEEQTMKALMNWRKKAMEKKKVRDADAFLAQMSVDFATPASSRSASPVHLLQDHRARSDDPPSPITVASPPAPEEDIYPVPAAAASRQLLDDPPDRRWMASSSADIADSDFSFSAQR</sequence>
<proteinExistence type="inferred from homology"/>
<dbReference type="EMBL" id="AP003518">
    <property type="protein sequence ID" value="BAD37345.1"/>
    <property type="status" value="ALT_SEQ"/>
    <property type="molecule type" value="Genomic_DNA"/>
</dbReference>
<dbReference type="EMBL" id="AP004012">
    <property type="protein sequence ID" value="BAD37627.1"/>
    <property type="status" value="ALT_SEQ"/>
    <property type="molecule type" value="Genomic_DNA"/>
</dbReference>
<dbReference type="EMBL" id="AP008212">
    <property type="protein sequence ID" value="BAF19578.1"/>
    <property type="status" value="ALT_SEQ"/>
    <property type="molecule type" value="Genomic_DNA"/>
</dbReference>
<dbReference type="EMBL" id="AP014962">
    <property type="status" value="NOT_ANNOTATED_CDS"/>
    <property type="molecule type" value="Genomic_DNA"/>
</dbReference>
<dbReference type="EMBL" id="AF490386">
    <property type="protein sequence ID" value="AAO61753.1"/>
    <property type="status" value="ALT_FRAME"/>
    <property type="molecule type" value="Genomic_DNA"/>
</dbReference>
<dbReference type="SMR" id="Q0DC45"/>
<dbReference type="FunCoup" id="Q0DC45">
    <property type="interactions" value="168"/>
</dbReference>
<dbReference type="STRING" id="39947.Q0DC45"/>
<dbReference type="PaxDb" id="39947-Q0DC45"/>
<dbReference type="GeneID" id="4341067"/>
<dbReference type="KEGG" id="dosa:Os06g0486300"/>
<dbReference type="KEGG" id="osa:4341067"/>
<dbReference type="eggNOG" id="ENOG502QVKX">
    <property type="taxonomic scope" value="Eukaryota"/>
</dbReference>
<dbReference type="HOGENOM" id="CLU_024720_1_0_1"/>
<dbReference type="InParanoid" id="Q0DC45"/>
<dbReference type="OrthoDB" id="1388414at2759"/>
<dbReference type="Proteomes" id="UP000000763">
    <property type="component" value="Chromosome 6"/>
</dbReference>
<dbReference type="Proteomes" id="UP000059680">
    <property type="component" value="Chromosome 6"/>
</dbReference>
<dbReference type="GO" id="GO:0016020">
    <property type="term" value="C:membrane"/>
    <property type="evidence" value="ECO:0007669"/>
    <property type="project" value="UniProtKB-SubCell"/>
</dbReference>
<dbReference type="GO" id="GO:0005516">
    <property type="term" value="F:calmodulin binding"/>
    <property type="evidence" value="ECO:0007669"/>
    <property type="project" value="UniProtKB-KW"/>
</dbReference>
<dbReference type="GO" id="GO:0006952">
    <property type="term" value="P:defense response"/>
    <property type="evidence" value="ECO:0007669"/>
    <property type="project" value="UniProtKB-KW"/>
</dbReference>
<dbReference type="InterPro" id="IPR004326">
    <property type="entry name" value="Mlo"/>
</dbReference>
<dbReference type="PANTHER" id="PTHR31942:SF82">
    <property type="entry name" value="MLO PROTEIN HOMOLOG 1"/>
    <property type="match status" value="1"/>
</dbReference>
<dbReference type="PANTHER" id="PTHR31942">
    <property type="entry name" value="MLO-LIKE PROTEIN 1"/>
    <property type="match status" value="1"/>
</dbReference>
<dbReference type="Pfam" id="PF03094">
    <property type="entry name" value="Mlo"/>
    <property type="match status" value="1"/>
</dbReference>